<organism>
    <name type="scientific">Bordetella avium (strain 197N)</name>
    <dbReference type="NCBI Taxonomy" id="360910"/>
    <lineage>
        <taxon>Bacteria</taxon>
        <taxon>Pseudomonadati</taxon>
        <taxon>Pseudomonadota</taxon>
        <taxon>Betaproteobacteria</taxon>
        <taxon>Burkholderiales</taxon>
        <taxon>Alcaligenaceae</taxon>
        <taxon>Bordetella</taxon>
    </lineage>
</organism>
<protein>
    <recommendedName>
        <fullName evidence="1">UPF0102 protein BAV3162</fullName>
    </recommendedName>
</protein>
<evidence type="ECO:0000255" key="1">
    <source>
        <dbReference type="HAMAP-Rule" id="MF_00048"/>
    </source>
</evidence>
<accession>Q2KU88</accession>
<sequence>MRRLLDFLRRGLIRPDPRHAQGKRAEAQGLRLLRAQGLRLLARNARNRHGELDLIMLDGEVLVVVEVRWRSGSAFGGAAASIGPAKQARLARAAACWLAGSEHAGRRLRFDVLAFEAGQARWLRGAFEPPAYIASQALRARGRRR</sequence>
<dbReference type="EMBL" id="AM167904">
    <property type="protein sequence ID" value="CAJ50772.1"/>
    <property type="molecule type" value="Genomic_DNA"/>
</dbReference>
<dbReference type="RefSeq" id="WP_012418800.1">
    <property type="nucleotide sequence ID" value="NC_010645.1"/>
</dbReference>
<dbReference type="SMR" id="Q2KU88"/>
<dbReference type="STRING" id="360910.BAV3162"/>
<dbReference type="GeneID" id="92933581"/>
<dbReference type="KEGG" id="bav:BAV3162"/>
<dbReference type="eggNOG" id="COG0792">
    <property type="taxonomic scope" value="Bacteria"/>
</dbReference>
<dbReference type="HOGENOM" id="CLU_115353_1_0_4"/>
<dbReference type="OrthoDB" id="9794876at2"/>
<dbReference type="Proteomes" id="UP000001977">
    <property type="component" value="Chromosome"/>
</dbReference>
<dbReference type="GO" id="GO:0003676">
    <property type="term" value="F:nucleic acid binding"/>
    <property type="evidence" value="ECO:0007669"/>
    <property type="project" value="InterPro"/>
</dbReference>
<dbReference type="Gene3D" id="3.40.1350.10">
    <property type="match status" value="1"/>
</dbReference>
<dbReference type="HAMAP" id="MF_00048">
    <property type="entry name" value="UPF0102"/>
    <property type="match status" value="1"/>
</dbReference>
<dbReference type="InterPro" id="IPR011335">
    <property type="entry name" value="Restrct_endonuc-II-like"/>
</dbReference>
<dbReference type="InterPro" id="IPR011856">
    <property type="entry name" value="tRNA_endonuc-like_dom_sf"/>
</dbReference>
<dbReference type="InterPro" id="IPR003509">
    <property type="entry name" value="UPF0102_YraN-like"/>
</dbReference>
<dbReference type="NCBIfam" id="NF009150">
    <property type="entry name" value="PRK12497.1-3"/>
    <property type="match status" value="1"/>
</dbReference>
<dbReference type="NCBIfam" id="TIGR00252">
    <property type="entry name" value="YraN family protein"/>
    <property type="match status" value="1"/>
</dbReference>
<dbReference type="PANTHER" id="PTHR34039">
    <property type="entry name" value="UPF0102 PROTEIN YRAN"/>
    <property type="match status" value="1"/>
</dbReference>
<dbReference type="PANTHER" id="PTHR34039:SF1">
    <property type="entry name" value="UPF0102 PROTEIN YRAN"/>
    <property type="match status" value="1"/>
</dbReference>
<dbReference type="Pfam" id="PF02021">
    <property type="entry name" value="UPF0102"/>
    <property type="match status" value="1"/>
</dbReference>
<dbReference type="SUPFAM" id="SSF52980">
    <property type="entry name" value="Restriction endonuclease-like"/>
    <property type="match status" value="1"/>
</dbReference>
<gene>
    <name type="ordered locus">BAV3162</name>
</gene>
<proteinExistence type="inferred from homology"/>
<reference key="1">
    <citation type="journal article" date="2006" name="J. Bacteriol.">
        <title>Comparison of the genome sequence of the poultry pathogen Bordetella avium with those of B. bronchiseptica, B. pertussis, and B. parapertussis reveals extensive diversity in surface structures associated with host interaction.</title>
        <authorList>
            <person name="Sebaihia M."/>
            <person name="Preston A."/>
            <person name="Maskell D.J."/>
            <person name="Kuzmiak H."/>
            <person name="Connell T.D."/>
            <person name="King N.D."/>
            <person name="Orndorff P.E."/>
            <person name="Miyamoto D.M."/>
            <person name="Thomson N.R."/>
            <person name="Harris D."/>
            <person name="Goble A."/>
            <person name="Lord A."/>
            <person name="Murphy L."/>
            <person name="Quail M.A."/>
            <person name="Rutter S."/>
            <person name="Squares R."/>
            <person name="Squares S."/>
            <person name="Woodward J."/>
            <person name="Parkhill J."/>
            <person name="Temple L.M."/>
        </authorList>
    </citation>
    <scope>NUCLEOTIDE SEQUENCE [LARGE SCALE GENOMIC DNA]</scope>
    <source>
        <strain>197N</strain>
    </source>
</reference>
<keyword id="KW-1185">Reference proteome</keyword>
<comment type="similarity">
    <text evidence="1">Belongs to the UPF0102 family.</text>
</comment>
<feature type="chain" id="PRO_0000336131" description="UPF0102 protein BAV3162">
    <location>
        <begin position="1"/>
        <end position="145"/>
    </location>
</feature>
<name>Y3162_BORA1</name>